<evidence type="ECO:0000255" key="1">
    <source>
        <dbReference type="HAMAP-Rule" id="MF_00178"/>
    </source>
</evidence>
<keyword id="KW-0686">Riboflavin biosynthesis</keyword>
<keyword id="KW-0808">Transferase</keyword>
<protein>
    <recommendedName>
        <fullName evidence="1">6,7-dimethyl-8-ribityllumazine synthase</fullName>
        <shortName evidence="1">DMRL synthase</shortName>
        <shortName evidence="1">LS</shortName>
        <shortName evidence="1">Lumazine synthase</shortName>
        <ecNumber evidence="1">2.5.1.78</ecNumber>
    </recommendedName>
</protein>
<dbReference type="EC" id="2.5.1.78" evidence="1"/>
<dbReference type="EMBL" id="CP000867">
    <property type="protein sequence ID" value="ABX01714.1"/>
    <property type="molecule type" value="Genomic_DNA"/>
</dbReference>
<dbReference type="SMR" id="A9A8P1"/>
<dbReference type="STRING" id="444158.MmarC6_0899"/>
<dbReference type="KEGG" id="mmx:MmarC6_0899"/>
<dbReference type="eggNOG" id="arCOG01323">
    <property type="taxonomic scope" value="Archaea"/>
</dbReference>
<dbReference type="HOGENOM" id="CLU_089358_3_1_2"/>
<dbReference type="OrthoDB" id="7610at2157"/>
<dbReference type="PhylomeDB" id="A9A8P1"/>
<dbReference type="UniPathway" id="UPA00275">
    <property type="reaction ID" value="UER00404"/>
</dbReference>
<dbReference type="GO" id="GO:0009349">
    <property type="term" value="C:riboflavin synthase complex"/>
    <property type="evidence" value="ECO:0007669"/>
    <property type="project" value="InterPro"/>
</dbReference>
<dbReference type="GO" id="GO:0000906">
    <property type="term" value="F:6,7-dimethyl-8-ribityllumazine synthase activity"/>
    <property type="evidence" value="ECO:0007669"/>
    <property type="project" value="UniProtKB-UniRule"/>
</dbReference>
<dbReference type="GO" id="GO:0009231">
    <property type="term" value="P:riboflavin biosynthetic process"/>
    <property type="evidence" value="ECO:0007669"/>
    <property type="project" value="UniProtKB-UniRule"/>
</dbReference>
<dbReference type="CDD" id="cd09211">
    <property type="entry name" value="Lumazine_synthase_archaeal"/>
    <property type="match status" value="1"/>
</dbReference>
<dbReference type="FunFam" id="3.40.50.960:FF:000003">
    <property type="entry name" value="6,7-dimethyl-8-ribityllumazine synthase"/>
    <property type="match status" value="1"/>
</dbReference>
<dbReference type="Gene3D" id="3.40.50.960">
    <property type="entry name" value="Lumazine/riboflavin synthase"/>
    <property type="match status" value="1"/>
</dbReference>
<dbReference type="HAMAP" id="MF_00178">
    <property type="entry name" value="Lumazine_synth"/>
    <property type="match status" value="1"/>
</dbReference>
<dbReference type="InterPro" id="IPR034964">
    <property type="entry name" value="LS"/>
</dbReference>
<dbReference type="InterPro" id="IPR002180">
    <property type="entry name" value="LS/RS"/>
</dbReference>
<dbReference type="InterPro" id="IPR036467">
    <property type="entry name" value="LS/RS_sf"/>
</dbReference>
<dbReference type="NCBIfam" id="TIGR00114">
    <property type="entry name" value="lumazine-synth"/>
    <property type="match status" value="1"/>
</dbReference>
<dbReference type="PANTHER" id="PTHR21058:SF0">
    <property type="entry name" value="6,7-DIMETHYL-8-RIBITYLLUMAZINE SYNTHASE"/>
    <property type="match status" value="1"/>
</dbReference>
<dbReference type="PANTHER" id="PTHR21058">
    <property type="entry name" value="6,7-DIMETHYL-8-RIBITYLLUMAZINE SYNTHASE DMRL SYNTHASE LUMAZINE SYNTHASE"/>
    <property type="match status" value="1"/>
</dbReference>
<dbReference type="Pfam" id="PF00885">
    <property type="entry name" value="DMRL_synthase"/>
    <property type="match status" value="1"/>
</dbReference>
<dbReference type="SUPFAM" id="SSF52121">
    <property type="entry name" value="Lumazine synthase"/>
    <property type="match status" value="1"/>
</dbReference>
<proteinExistence type="inferred from homology"/>
<name>RISB_METM6</name>
<gene>
    <name evidence="1" type="primary">ribH</name>
    <name type="ordered locus">MmarC6_0899</name>
</gene>
<sequence length="137" mass="14940">MVKLGFVIAEFNRDLTFMMEKLAEEHAAFLGADVSCKIMVPGSFDMPLAIKTLLQKDDIDAVVTIGCVIEGDTEHDEIVVQNAARKIADLSLEFGKPVALGIAGPGMTRMQAEDRIDYGKSAVEAAVKMVKRLKEIQ</sequence>
<reference key="1">
    <citation type="submission" date="2007-10" db="EMBL/GenBank/DDBJ databases">
        <title>Complete sequence of Methanococcus maripaludis C6.</title>
        <authorList>
            <consortium name="US DOE Joint Genome Institute"/>
            <person name="Copeland A."/>
            <person name="Lucas S."/>
            <person name="Lapidus A."/>
            <person name="Barry K."/>
            <person name="Glavina del Rio T."/>
            <person name="Dalin E."/>
            <person name="Tice H."/>
            <person name="Pitluck S."/>
            <person name="Clum A."/>
            <person name="Schmutz J."/>
            <person name="Larimer F."/>
            <person name="Land M."/>
            <person name="Hauser L."/>
            <person name="Kyrpides N."/>
            <person name="Mikhailova N."/>
            <person name="Sieprawska-Lupa M."/>
            <person name="Whitman W.B."/>
            <person name="Richardson P."/>
        </authorList>
    </citation>
    <scope>NUCLEOTIDE SEQUENCE [LARGE SCALE GENOMIC DNA]</scope>
    <source>
        <strain>C6 / ATCC BAA-1332</strain>
    </source>
</reference>
<organism>
    <name type="scientific">Methanococcus maripaludis (strain C6 / ATCC BAA-1332)</name>
    <dbReference type="NCBI Taxonomy" id="444158"/>
    <lineage>
        <taxon>Archaea</taxon>
        <taxon>Methanobacteriati</taxon>
        <taxon>Methanobacteriota</taxon>
        <taxon>Methanomada group</taxon>
        <taxon>Methanococci</taxon>
        <taxon>Methanococcales</taxon>
        <taxon>Methanococcaceae</taxon>
        <taxon>Methanococcus</taxon>
    </lineage>
</organism>
<accession>A9A8P1</accession>
<feature type="chain" id="PRO_1000098206" description="6,7-dimethyl-8-ribityllumazine synthase">
    <location>
        <begin position="1"/>
        <end position="137"/>
    </location>
</feature>
<feature type="active site" description="Proton donor" evidence="1">
    <location>
        <position position="75"/>
    </location>
</feature>
<feature type="binding site" evidence="1">
    <location>
        <position position="11"/>
    </location>
    <ligand>
        <name>5-amino-6-(D-ribitylamino)uracil</name>
        <dbReference type="ChEBI" id="CHEBI:15934"/>
    </ligand>
</feature>
<feature type="binding site" evidence="1">
    <location>
        <begin position="43"/>
        <end position="45"/>
    </location>
    <ligand>
        <name>5-amino-6-(D-ribitylamino)uracil</name>
        <dbReference type="ChEBI" id="CHEBI:15934"/>
    </ligand>
</feature>
<feature type="binding site" evidence="1">
    <location>
        <begin position="67"/>
        <end position="69"/>
    </location>
    <ligand>
        <name>5-amino-6-(D-ribitylamino)uracil</name>
        <dbReference type="ChEBI" id="CHEBI:15934"/>
    </ligand>
</feature>
<feature type="binding site" evidence="1">
    <location>
        <begin position="72"/>
        <end position="73"/>
    </location>
    <ligand>
        <name>(2S)-2-hydroxy-3-oxobutyl phosphate</name>
        <dbReference type="ChEBI" id="CHEBI:58830"/>
    </ligand>
</feature>
<feature type="binding site" evidence="1">
    <location>
        <position position="100"/>
    </location>
    <ligand>
        <name>5-amino-6-(D-ribitylamino)uracil</name>
        <dbReference type="ChEBI" id="CHEBI:15934"/>
    </ligand>
</feature>
<feature type="binding site" evidence="1">
    <location>
        <position position="115"/>
    </location>
    <ligand>
        <name>(2S)-2-hydroxy-3-oxobutyl phosphate</name>
        <dbReference type="ChEBI" id="CHEBI:58830"/>
    </ligand>
</feature>
<comment type="function">
    <text evidence="1">Catalyzes the formation of 6,7-dimethyl-8-ribityllumazine by condensation of 5-amino-6-(D-ribitylamino)uracil with 3,4-dihydroxy-2-butanone 4-phosphate. This is the penultimate step in the biosynthesis of riboflavin.</text>
</comment>
<comment type="catalytic activity">
    <reaction evidence="1">
        <text>(2S)-2-hydroxy-3-oxobutyl phosphate + 5-amino-6-(D-ribitylamino)uracil = 6,7-dimethyl-8-(1-D-ribityl)lumazine + phosphate + 2 H2O + H(+)</text>
        <dbReference type="Rhea" id="RHEA:26152"/>
        <dbReference type="ChEBI" id="CHEBI:15377"/>
        <dbReference type="ChEBI" id="CHEBI:15378"/>
        <dbReference type="ChEBI" id="CHEBI:15934"/>
        <dbReference type="ChEBI" id="CHEBI:43474"/>
        <dbReference type="ChEBI" id="CHEBI:58201"/>
        <dbReference type="ChEBI" id="CHEBI:58830"/>
        <dbReference type="EC" id="2.5.1.78"/>
    </reaction>
</comment>
<comment type="pathway">
    <text evidence="1">Cofactor biosynthesis; riboflavin biosynthesis; riboflavin from 2-hydroxy-3-oxobutyl phosphate and 5-amino-6-(D-ribitylamino)uracil: step 1/2.</text>
</comment>
<comment type="subunit">
    <text evidence="1">Forms an icosahedral capsid composed of 60 subunits, arranged as a dodecamer of pentamers.</text>
</comment>
<comment type="similarity">
    <text evidence="1">Belongs to the DMRL synthase family.</text>
</comment>